<proteinExistence type="inferred from homology"/>
<reference key="1">
    <citation type="journal article" date="2005" name="Genome Res.">
        <title>Comparative and functional genomic analyses of the pathogenicity of phytopathogen Xanthomonas campestris pv. campestris.</title>
        <authorList>
            <person name="Qian W."/>
            <person name="Jia Y."/>
            <person name="Ren S.-X."/>
            <person name="He Y.-Q."/>
            <person name="Feng J.-X."/>
            <person name="Lu L.-F."/>
            <person name="Sun Q."/>
            <person name="Ying G."/>
            <person name="Tang D.-J."/>
            <person name="Tang H."/>
            <person name="Wu W."/>
            <person name="Hao P."/>
            <person name="Wang L."/>
            <person name="Jiang B.-L."/>
            <person name="Zeng S."/>
            <person name="Gu W.-Y."/>
            <person name="Lu G."/>
            <person name="Rong L."/>
            <person name="Tian Y."/>
            <person name="Yao Z."/>
            <person name="Fu G."/>
            <person name="Chen B."/>
            <person name="Fang R."/>
            <person name="Qiang B."/>
            <person name="Chen Z."/>
            <person name="Zhao G.-P."/>
            <person name="Tang J.-L."/>
            <person name="He C."/>
        </authorList>
    </citation>
    <scope>NUCLEOTIDE SEQUENCE [LARGE SCALE GENOMIC DNA]</scope>
    <source>
        <strain>8004</strain>
    </source>
</reference>
<evidence type="ECO:0000255" key="1">
    <source>
        <dbReference type="HAMAP-Rule" id="MF_00278"/>
    </source>
</evidence>
<sequence>MTDLALIDAGGANLGSVRYALERLGVEARVVRDAQGLQGAERVILPGVGAAPEAMARLRAQGLIEPLQQLQVPLIGICLGMQLLFEHSEEGDVDCLGMLPGIVRHMTPALGIRVPHMGWNQLVPMRDSALLAGLPERASAYFVHGYAAPVTADTVAACDHGGLFTAVVQSGLRCGAQFHPERSADTGARILRNFLEMSFP</sequence>
<protein>
    <recommendedName>
        <fullName evidence="1">Imidazole glycerol phosphate synthase subunit HisH</fullName>
        <ecNumber evidence="1">4.3.2.10</ecNumber>
    </recommendedName>
    <alternativeName>
        <fullName evidence="1">IGP synthase glutaminase subunit</fullName>
        <ecNumber evidence="1">3.5.1.2</ecNumber>
    </alternativeName>
    <alternativeName>
        <fullName evidence="1">IGP synthase subunit HisH</fullName>
    </alternativeName>
    <alternativeName>
        <fullName evidence="1">ImGP synthase subunit HisH</fullName>
        <shortName evidence="1">IGPS subunit HisH</shortName>
    </alternativeName>
</protein>
<name>HIS5_XANC8</name>
<keyword id="KW-0028">Amino-acid biosynthesis</keyword>
<keyword id="KW-0963">Cytoplasm</keyword>
<keyword id="KW-0315">Glutamine amidotransferase</keyword>
<keyword id="KW-0368">Histidine biosynthesis</keyword>
<keyword id="KW-0378">Hydrolase</keyword>
<keyword id="KW-0456">Lyase</keyword>
<accession>Q4UU43</accession>
<gene>
    <name evidence="1" type="primary">hisH</name>
    <name type="ordered locus">XC_2377</name>
</gene>
<comment type="function">
    <text evidence="1">IGPS catalyzes the conversion of PRFAR and glutamine to IGP, AICAR and glutamate. The HisH subunit catalyzes the hydrolysis of glutamine to glutamate and ammonia as part of the synthesis of IGP and AICAR. The resulting ammonia molecule is channeled to the active site of HisF.</text>
</comment>
<comment type="catalytic activity">
    <reaction evidence="1">
        <text>5-[(5-phospho-1-deoxy-D-ribulos-1-ylimino)methylamino]-1-(5-phospho-beta-D-ribosyl)imidazole-4-carboxamide + L-glutamine = D-erythro-1-(imidazol-4-yl)glycerol 3-phosphate + 5-amino-1-(5-phospho-beta-D-ribosyl)imidazole-4-carboxamide + L-glutamate + H(+)</text>
        <dbReference type="Rhea" id="RHEA:24793"/>
        <dbReference type="ChEBI" id="CHEBI:15378"/>
        <dbReference type="ChEBI" id="CHEBI:29985"/>
        <dbReference type="ChEBI" id="CHEBI:58278"/>
        <dbReference type="ChEBI" id="CHEBI:58359"/>
        <dbReference type="ChEBI" id="CHEBI:58475"/>
        <dbReference type="ChEBI" id="CHEBI:58525"/>
        <dbReference type="EC" id="4.3.2.10"/>
    </reaction>
</comment>
<comment type="catalytic activity">
    <reaction evidence="1">
        <text>L-glutamine + H2O = L-glutamate + NH4(+)</text>
        <dbReference type="Rhea" id="RHEA:15889"/>
        <dbReference type="ChEBI" id="CHEBI:15377"/>
        <dbReference type="ChEBI" id="CHEBI:28938"/>
        <dbReference type="ChEBI" id="CHEBI:29985"/>
        <dbReference type="ChEBI" id="CHEBI:58359"/>
        <dbReference type="EC" id="3.5.1.2"/>
    </reaction>
</comment>
<comment type="pathway">
    <text evidence="1">Amino-acid biosynthesis; L-histidine biosynthesis; L-histidine from 5-phospho-alpha-D-ribose 1-diphosphate: step 5/9.</text>
</comment>
<comment type="subunit">
    <text evidence="1">Heterodimer of HisH and HisF.</text>
</comment>
<comment type="subcellular location">
    <subcellularLocation>
        <location evidence="1">Cytoplasm</location>
    </subcellularLocation>
</comment>
<feature type="chain" id="PRO_0000231770" description="Imidazole glycerol phosphate synthase subunit HisH">
    <location>
        <begin position="1"/>
        <end position="200"/>
    </location>
</feature>
<feature type="domain" description="Glutamine amidotransferase type-1" evidence="1">
    <location>
        <begin position="3"/>
        <end position="200"/>
    </location>
</feature>
<feature type="active site" description="Nucleophile" evidence="1">
    <location>
        <position position="78"/>
    </location>
</feature>
<feature type="active site" evidence="1">
    <location>
        <position position="179"/>
    </location>
</feature>
<feature type="active site" evidence="1">
    <location>
        <position position="181"/>
    </location>
</feature>
<dbReference type="EC" id="4.3.2.10" evidence="1"/>
<dbReference type="EC" id="3.5.1.2" evidence="1"/>
<dbReference type="EMBL" id="CP000050">
    <property type="protein sequence ID" value="AAY49430.1"/>
    <property type="molecule type" value="Genomic_DNA"/>
</dbReference>
<dbReference type="RefSeq" id="WP_011036982.1">
    <property type="nucleotide sequence ID" value="NZ_CP155948.1"/>
</dbReference>
<dbReference type="SMR" id="Q4UU43"/>
<dbReference type="KEGG" id="xcb:XC_2377"/>
<dbReference type="HOGENOM" id="CLU_071837_0_0_6"/>
<dbReference type="UniPathway" id="UPA00031">
    <property type="reaction ID" value="UER00010"/>
</dbReference>
<dbReference type="Proteomes" id="UP000000420">
    <property type="component" value="Chromosome"/>
</dbReference>
<dbReference type="GO" id="GO:0005737">
    <property type="term" value="C:cytoplasm"/>
    <property type="evidence" value="ECO:0007669"/>
    <property type="project" value="UniProtKB-SubCell"/>
</dbReference>
<dbReference type="GO" id="GO:0004359">
    <property type="term" value="F:glutaminase activity"/>
    <property type="evidence" value="ECO:0007669"/>
    <property type="project" value="UniProtKB-EC"/>
</dbReference>
<dbReference type="GO" id="GO:0000107">
    <property type="term" value="F:imidazoleglycerol-phosphate synthase activity"/>
    <property type="evidence" value="ECO:0007669"/>
    <property type="project" value="UniProtKB-UniRule"/>
</dbReference>
<dbReference type="GO" id="GO:0016829">
    <property type="term" value="F:lyase activity"/>
    <property type="evidence" value="ECO:0007669"/>
    <property type="project" value="UniProtKB-KW"/>
</dbReference>
<dbReference type="GO" id="GO:0000105">
    <property type="term" value="P:L-histidine biosynthetic process"/>
    <property type="evidence" value="ECO:0007669"/>
    <property type="project" value="UniProtKB-UniRule"/>
</dbReference>
<dbReference type="CDD" id="cd01748">
    <property type="entry name" value="GATase1_IGP_Synthase"/>
    <property type="match status" value="1"/>
</dbReference>
<dbReference type="FunFam" id="3.40.50.880:FF:000009">
    <property type="entry name" value="Imidazole glycerol phosphate synthase subunit HisH"/>
    <property type="match status" value="1"/>
</dbReference>
<dbReference type="Gene3D" id="3.40.50.880">
    <property type="match status" value="1"/>
</dbReference>
<dbReference type="HAMAP" id="MF_00278">
    <property type="entry name" value="HisH"/>
    <property type="match status" value="1"/>
</dbReference>
<dbReference type="InterPro" id="IPR029062">
    <property type="entry name" value="Class_I_gatase-like"/>
</dbReference>
<dbReference type="InterPro" id="IPR017926">
    <property type="entry name" value="GATASE"/>
</dbReference>
<dbReference type="InterPro" id="IPR010139">
    <property type="entry name" value="Imidazole-glycPsynth_HisH"/>
</dbReference>
<dbReference type="NCBIfam" id="TIGR01855">
    <property type="entry name" value="IMP_synth_hisH"/>
    <property type="match status" value="1"/>
</dbReference>
<dbReference type="PANTHER" id="PTHR42701">
    <property type="entry name" value="IMIDAZOLE GLYCEROL PHOSPHATE SYNTHASE SUBUNIT HISH"/>
    <property type="match status" value="1"/>
</dbReference>
<dbReference type="PANTHER" id="PTHR42701:SF1">
    <property type="entry name" value="IMIDAZOLE GLYCEROL PHOSPHATE SYNTHASE SUBUNIT HISH"/>
    <property type="match status" value="1"/>
</dbReference>
<dbReference type="Pfam" id="PF00117">
    <property type="entry name" value="GATase"/>
    <property type="match status" value="1"/>
</dbReference>
<dbReference type="PIRSF" id="PIRSF000495">
    <property type="entry name" value="Amidotransf_hisH"/>
    <property type="match status" value="1"/>
</dbReference>
<dbReference type="SUPFAM" id="SSF52317">
    <property type="entry name" value="Class I glutamine amidotransferase-like"/>
    <property type="match status" value="1"/>
</dbReference>
<dbReference type="PROSITE" id="PS51273">
    <property type="entry name" value="GATASE_TYPE_1"/>
    <property type="match status" value="1"/>
</dbReference>
<organism>
    <name type="scientific">Xanthomonas campestris pv. campestris (strain 8004)</name>
    <dbReference type="NCBI Taxonomy" id="314565"/>
    <lineage>
        <taxon>Bacteria</taxon>
        <taxon>Pseudomonadati</taxon>
        <taxon>Pseudomonadota</taxon>
        <taxon>Gammaproteobacteria</taxon>
        <taxon>Lysobacterales</taxon>
        <taxon>Lysobacteraceae</taxon>
        <taxon>Xanthomonas</taxon>
    </lineage>
</organism>